<comment type="function">
    <text evidence="1">Cell surface proteoglycan that bears heparan sulfate. Putative cell surface coreceptor for growth factors, extracellular matrix proteins, proteases and anti-proteases. Enhances migration and invasion of cancer cells through WNT5A signaling (By similarity).</text>
</comment>
<comment type="subcellular location">
    <subcellularLocation>
        <location evidence="1">Cell membrane</location>
        <topology evidence="1">Lipid-anchor</topology>
        <topology evidence="1">GPI-anchor</topology>
        <orientation evidence="1">Extracellular side</orientation>
    </subcellularLocation>
</comment>
<comment type="subcellular location">
    <molecule>Secreted glypican-6</molecule>
    <subcellularLocation>
        <location evidence="1">Secreted</location>
        <location evidence="1">Extracellular space</location>
    </subcellularLocation>
</comment>
<comment type="similarity">
    <text evidence="4">Belongs to the glypican family.</text>
</comment>
<keyword id="KW-1003">Cell membrane</keyword>
<keyword id="KW-0325">Glycoprotein</keyword>
<keyword id="KW-0336">GPI-anchor</keyword>
<keyword id="KW-0357">Heparan sulfate</keyword>
<keyword id="KW-0449">Lipoprotein</keyword>
<keyword id="KW-0472">Membrane</keyword>
<keyword id="KW-0654">Proteoglycan</keyword>
<keyword id="KW-1185">Reference proteome</keyword>
<keyword id="KW-0964">Secreted</keyword>
<keyword id="KW-0732">Signal</keyword>
<protein>
    <recommendedName>
        <fullName>Glypican-6</fullName>
    </recommendedName>
    <component>
        <recommendedName>
            <fullName>Secreted glypican-6</fullName>
        </recommendedName>
    </component>
</protein>
<dbReference type="EMBL" id="CR857683">
    <property type="protein sequence ID" value="CAH89953.1"/>
    <property type="molecule type" value="mRNA"/>
</dbReference>
<dbReference type="RefSeq" id="NP_001124916.1">
    <property type="nucleotide sequence ID" value="NM_001131444.1"/>
</dbReference>
<dbReference type="SMR" id="Q5RE54"/>
<dbReference type="FunCoup" id="Q5RE54">
    <property type="interactions" value="1650"/>
</dbReference>
<dbReference type="STRING" id="9601.ENSPPYP00000006200"/>
<dbReference type="Ensembl" id="ENSPPYT00000006445.3">
    <property type="protein sequence ID" value="ENSPPYP00000006200.2"/>
    <property type="gene ID" value="ENSPPYG00000005442.3"/>
</dbReference>
<dbReference type="GeneID" id="100171786"/>
<dbReference type="KEGG" id="pon:100171786"/>
<dbReference type="CTD" id="10082"/>
<dbReference type="eggNOG" id="KOG3821">
    <property type="taxonomic scope" value="Eukaryota"/>
</dbReference>
<dbReference type="GeneTree" id="ENSGT01050000244897"/>
<dbReference type="HOGENOM" id="CLU_024658_2_0_1"/>
<dbReference type="InParanoid" id="Q5RE54"/>
<dbReference type="OMA" id="XDESSGS"/>
<dbReference type="OrthoDB" id="10010764at2759"/>
<dbReference type="TreeFam" id="TF105317"/>
<dbReference type="Proteomes" id="UP000001595">
    <property type="component" value="Chromosome 13"/>
</dbReference>
<dbReference type="GO" id="GO:0009986">
    <property type="term" value="C:cell surface"/>
    <property type="evidence" value="ECO:0007669"/>
    <property type="project" value="TreeGrafter"/>
</dbReference>
<dbReference type="GO" id="GO:0005576">
    <property type="term" value="C:extracellular region"/>
    <property type="evidence" value="ECO:0007669"/>
    <property type="project" value="UniProtKB-SubCell"/>
</dbReference>
<dbReference type="GO" id="GO:0043202">
    <property type="term" value="C:lysosomal lumen"/>
    <property type="evidence" value="ECO:0007669"/>
    <property type="project" value="UniProtKB-ARBA"/>
</dbReference>
<dbReference type="GO" id="GO:0005886">
    <property type="term" value="C:plasma membrane"/>
    <property type="evidence" value="ECO:0007669"/>
    <property type="project" value="UniProtKB-SubCell"/>
</dbReference>
<dbReference type="GO" id="GO:0098552">
    <property type="term" value="C:side of membrane"/>
    <property type="evidence" value="ECO:0007669"/>
    <property type="project" value="UniProtKB-KW"/>
</dbReference>
<dbReference type="GO" id="GO:0045202">
    <property type="term" value="C:synapse"/>
    <property type="evidence" value="ECO:0007669"/>
    <property type="project" value="Ensembl"/>
</dbReference>
<dbReference type="GO" id="GO:0016477">
    <property type="term" value="P:cell migration"/>
    <property type="evidence" value="ECO:0000250"/>
    <property type="project" value="UniProtKB"/>
</dbReference>
<dbReference type="GO" id="GO:0098696">
    <property type="term" value="P:regulation of neurotransmitter receptor localization to postsynaptic specialization membrane"/>
    <property type="evidence" value="ECO:0007669"/>
    <property type="project" value="TreeGrafter"/>
</dbReference>
<dbReference type="GO" id="GO:0009966">
    <property type="term" value="P:regulation of signal transduction"/>
    <property type="evidence" value="ECO:0007669"/>
    <property type="project" value="InterPro"/>
</dbReference>
<dbReference type="InterPro" id="IPR001863">
    <property type="entry name" value="Glypican"/>
</dbReference>
<dbReference type="InterPro" id="IPR019803">
    <property type="entry name" value="Glypican_CS"/>
</dbReference>
<dbReference type="PANTHER" id="PTHR10822">
    <property type="entry name" value="GLYPICAN"/>
    <property type="match status" value="1"/>
</dbReference>
<dbReference type="PANTHER" id="PTHR10822:SF31">
    <property type="entry name" value="GLYPICAN-6"/>
    <property type="match status" value="1"/>
</dbReference>
<dbReference type="Pfam" id="PF01153">
    <property type="entry name" value="Glypican"/>
    <property type="match status" value="1"/>
</dbReference>
<dbReference type="PROSITE" id="PS01207">
    <property type="entry name" value="GLYPICAN"/>
    <property type="match status" value="1"/>
</dbReference>
<organism>
    <name type="scientific">Pongo abelii</name>
    <name type="common">Sumatran orangutan</name>
    <name type="synonym">Pongo pygmaeus abelii</name>
    <dbReference type="NCBI Taxonomy" id="9601"/>
    <lineage>
        <taxon>Eukaryota</taxon>
        <taxon>Metazoa</taxon>
        <taxon>Chordata</taxon>
        <taxon>Craniata</taxon>
        <taxon>Vertebrata</taxon>
        <taxon>Euteleostomi</taxon>
        <taxon>Mammalia</taxon>
        <taxon>Eutheria</taxon>
        <taxon>Euarchontoglires</taxon>
        <taxon>Primates</taxon>
        <taxon>Haplorrhini</taxon>
        <taxon>Catarrhini</taxon>
        <taxon>Hominidae</taxon>
        <taxon>Pongo</taxon>
    </lineage>
</organism>
<name>GPC6_PONAB</name>
<feature type="signal peptide" evidence="2">
    <location>
        <begin position="1"/>
        <end position="23"/>
    </location>
</feature>
<feature type="chain" id="PRO_0000373796" description="Glypican-6">
    <location>
        <begin position="24"/>
        <end position="529"/>
    </location>
</feature>
<feature type="chain" id="PRO_0000373797" description="Secreted glypican-6">
    <location>
        <begin position="24"/>
        <end status="unknown"/>
    </location>
</feature>
<feature type="propeptide" id="PRO_0000373798" description="Removed in mature form" evidence="2">
    <location>
        <begin position="530"/>
        <end position="555"/>
    </location>
</feature>
<feature type="region of interest" description="Disordered" evidence="3">
    <location>
        <begin position="348"/>
        <end position="376"/>
    </location>
</feature>
<feature type="compositionally biased region" description="Low complexity" evidence="3">
    <location>
        <begin position="348"/>
        <end position="357"/>
    </location>
</feature>
<feature type="lipid moiety-binding region" description="GPI-anchor amidated serine" evidence="2">
    <location>
        <position position="529"/>
    </location>
</feature>
<reference key="1">
    <citation type="submission" date="2004-11" db="EMBL/GenBank/DDBJ databases">
        <authorList>
            <consortium name="The German cDNA consortium"/>
        </authorList>
    </citation>
    <scope>NUCLEOTIDE SEQUENCE [LARGE SCALE MRNA]</scope>
    <source>
        <tissue>Kidney</tissue>
    </source>
</reference>
<accession>Q5RE54</accession>
<evidence type="ECO:0000250" key="1"/>
<evidence type="ECO:0000255" key="2"/>
<evidence type="ECO:0000256" key="3">
    <source>
        <dbReference type="SAM" id="MobiDB-lite"/>
    </source>
</evidence>
<evidence type="ECO:0000305" key="4"/>
<gene>
    <name type="primary">GPC6</name>
</gene>
<proteinExistence type="evidence at transcript level"/>
<sequence length="555" mass="62766">MPSWIGAVILPLLGLLLSLPAGADVKARSCGEVRQAYGAKGFSLADIPYQEIAGEHLRICPQEYTCCTTEMEDKLSQQSKLEFENLVEETSHFVRTTFVSRHKKFDEFFRELLENAEKSLNDMFVRTYGMLYMQNSEVFQDLFTELKRYYTGGNVNLEEMLNDFWARLLERMFQLINPQYHFSEDYLECVSKYTDQLKPFGDVPRKLKIQVTRAFIAARTFVQGLTVGREVANRVSKVSPTPGCIRALMKMLYCPYCRGLPTVRPCNNYCLNVMKGCLANQADLDTEWNLFIDAMLLVAERLEGPFNIESVMDPIDVKISEAIMNMQENSMQVSAKVFQGCGQPKPAPALRSARSAPENFNTRFRPYNPEERPTTAAGTSLDRLVTDIKEKLKLSKKVWSSLPYTICKDESMTAGTSNEEECWNGHSKARYLPEIMNDGLTNQINNPEVDVDITRPDTFIRQQIMALRVMTNKLKNAYNGNDVNFQDTSDESSGSGSGSGCIDDVCPTEFEFVTTEAPAVDPDRREVDSSAAQRGHSLLSWSLTCIVLALQRLCR</sequence>